<reference key="1">
    <citation type="journal article" date="2003" name="Proc. Natl. Acad. Sci. U.S.A.">
        <title>Reductive genome evolution in Buchnera aphidicola.</title>
        <authorList>
            <person name="van Ham R.C.H.J."/>
            <person name="Kamerbeek J."/>
            <person name="Palacios C."/>
            <person name="Rausell C."/>
            <person name="Abascal F."/>
            <person name="Bastolla U."/>
            <person name="Fernandez J.M."/>
            <person name="Jimenez L."/>
            <person name="Postigo M."/>
            <person name="Silva F.J."/>
            <person name="Tamames J."/>
            <person name="Viguera E."/>
            <person name="Latorre A."/>
            <person name="Valencia A."/>
            <person name="Moran F."/>
            <person name="Moya A."/>
        </authorList>
    </citation>
    <scope>NUCLEOTIDE SEQUENCE [LARGE SCALE GENOMIC DNA]</scope>
    <source>
        <strain>Bp</strain>
    </source>
</reference>
<dbReference type="EC" id="5.6.2.2" evidence="1"/>
<dbReference type="EMBL" id="AE016826">
    <property type="protein sequence ID" value="AAO26902.1"/>
    <property type="molecule type" value="Genomic_DNA"/>
</dbReference>
<dbReference type="RefSeq" id="WP_011091303.1">
    <property type="nucleotide sequence ID" value="NC_004545.1"/>
</dbReference>
<dbReference type="SMR" id="Q89AS3"/>
<dbReference type="STRING" id="224915.bbp_169"/>
<dbReference type="KEGG" id="bab:bbp_169"/>
<dbReference type="eggNOG" id="COG0188">
    <property type="taxonomic scope" value="Bacteria"/>
</dbReference>
<dbReference type="HOGENOM" id="CLU_002977_6_1_6"/>
<dbReference type="OrthoDB" id="9806486at2"/>
<dbReference type="Proteomes" id="UP000000601">
    <property type="component" value="Chromosome"/>
</dbReference>
<dbReference type="GO" id="GO:0005694">
    <property type="term" value="C:chromosome"/>
    <property type="evidence" value="ECO:0007669"/>
    <property type="project" value="InterPro"/>
</dbReference>
<dbReference type="GO" id="GO:0005737">
    <property type="term" value="C:cytoplasm"/>
    <property type="evidence" value="ECO:0007669"/>
    <property type="project" value="UniProtKB-SubCell"/>
</dbReference>
<dbReference type="GO" id="GO:0009330">
    <property type="term" value="C:DNA topoisomerase type II (double strand cut, ATP-hydrolyzing) complex"/>
    <property type="evidence" value="ECO:0007669"/>
    <property type="project" value="TreeGrafter"/>
</dbReference>
<dbReference type="GO" id="GO:0005524">
    <property type="term" value="F:ATP binding"/>
    <property type="evidence" value="ECO:0007669"/>
    <property type="project" value="UniProtKB-UniRule"/>
</dbReference>
<dbReference type="GO" id="GO:0003677">
    <property type="term" value="F:DNA binding"/>
    <property type="evidence" value="ECO:0007669"/>
    <property type="project" value="UniProtKB-UniRule"/>
</dbReference>
<dbReference type="GO" id="GO:0034335">
    <property type="term" value="F:DNA negative supercoiling activity"/>
    <property type="evidence" value="ECO:0007669"/>
    <property type="project" value="UniProtKB-ARBA"/>
</dbReference>
<dbReference type="GO" id="GO:0006265">
    <property type="term" value="P:DNA topological change"/>
    <property type="evidence" value="ECO:0007669"/>
    <property type="project" value="UniProtKB-UniRule"/>
</dbReference>
<dbReference type="GO" id="GO:0006261">
    <property type="term" value="P:DNA-templated DNA replication"/>
    <property type="evidence" value="ECO:0007669"/>
    <property type="project" value="UniProtKB-UniRule"/>
</dbReference>
<dbReference type="CDD" id="cd00187">
    <property type="entry name" value="TOP4c"/>
    <property type="match status" value="1"/>
</dbReference>
<dbReference type="FunFam" id="3.30.1360.40:FF:000002">
    <property type="entry name" value="DNA gyrase subunit A"/>
    <property type="match status" value="1"/>
</dbReference>
<dbReference type="FunFam" id="3.90.199.10:FF:000001">
    <property type="entry name" value="DNA gyrase subunit A"/>
    <property type="match status" value="1"/>
</dbReference>
<dbReference type="FunFam" id="2.120.10.90:FF:000005">
    <property type="entry name" value="DNA topoisomerase 4 subunit A"/>
    <property type="match status" value="1"/>
</dbReference>
<dbReference type="Gene3D" id="3.30.1360.40">
    <property type="match status" value="1"/>
</dbReference>
<dbReference type="Gene3D" id="2.120.10.90">
    <property type="entry name" value="DNA gyrase/topoisomerase IV, subunit A, C-terminal"/>
    <property type="match status" value="1"/>
</dbReference>
<dbReference type="Gene3D" id="3.90.199.10">
    <property type="entry name" value="Topoisomerase II, domain 5"/>
    <property type="match status" value="1"/>
</dbReference>
<dbReference type="Gene3D" id="1.10.268.10">
    <property type="entry name" value="Topoisomerase, domain 3"/>
    <property type="match status" value="1"/>
</dbReference>
<dbReference type="HAMAP" id="MF_01897">
    <property type="entry name" value="GyrA"/>
    <property type="match status" value="1"/>
</dbReference>
<dbReference type="InterPro" id="IPR005743">
    <property type="entry name" value="GyrA"/>
</dbReference>
<dbReference type="InterPro" id="IPR006691">
    <property type="entry name" value="GyrA/parC_rep"/>
</dbReference>
<dbReference type="InterPro" id="IPR035516">
    <property type="entry name" value="Gyrase/topoIV_suA_C"/>
</dbReference>
<dbReference type="InterPro" id="IPR013760">
    <property type="entry name" value="Topo_IIA-like_dom_sf"/>
</dbReference>
<dbReference type="InterPro" id="IPR013758">
    <property type="entry name" value="Topo_IIA_A/C_ab"/>
</dbReference>
<dbReference type="InterPro" id="IPR013757">
    <property type="entry name" value="Topo_IIA_A_a_sf"/>
</dbReference>
<dbReference type="InterPro" id="IPR002205">
    <property type="entry name" value="Topo_IIA_dom_A"/>
</dbReference>
<dbReference type="InterPro" id="IPR050220">
    <property type="entry name" value="Type_II_DNA_Topoisomerases"/>
</dbReference>
<dbReference type="NCBIfam" id="TIGR01063">
    <property type="entry name" value="gyrA"/>
    <property type="match status" value="1"/>
</dbReference>
<dbReference type="NCBIfam" id="NF004043">
    <property type="entry name" value="PRK05560.1"/>
    <property type="match status" value="1"/>
</dbReference>
<dbReference type="NCBIfam" id="NF004044">
    <property type="entry name" value="PRK05561.1"/>
    <property type="match status" value="1"/>
</dbReference>
<dbReference type="PANTHER" id="PTHR43493:SF5">
    <property type="entry name" value="DNA GYRASE SUBUNIT A, CHLOROPLASTIC_MITOCHONDRIAL"/>
    <property type="match status" value="1"/>
</dbReference>
<dbReference type="PANTHER" id="PTHR43493">
    <property type="entry name" value="DNA GYRASE/TOPOISOMERASE SUBUNIT A"/>
    <property type="match status" value="1"/>
</dbReference>
<dbReference type="Pfam" id="PF03989">
    <property type="entry name" value="DNA_gyraseA_C"/>
    <property type="match status" value="6"/>
</dbReference>
<dbReference type="Pfam" id="PF00521">
    <property type="entry name" value="DNA_topoisoIV"/>
    <property type="match status" value="1"/>
</dbReference>
<dbReference type="SMART" id="SM00434">
    <property type="entry name" value="TOP4c"/>
    <property type="match status" value="1"/>
</dbReference>
<dbReference type="SUPFAM" id="SSF101904">
    <property type="entry name" value="GyrA/ParC C-terminal domain-like"/>
    <property type="match status" value="1"/>
</dbReference>
<dbReference type="SUPFAM" id="SSF56719">
    <property type="entry name" value="Type II DNA topoisomerase"/>
    <property type="match status" value="1"/>
</dbReference>
<dbReference type="PROSITE" id="PS52040">
    <property type="entry name" value="TOPO_IIA"/>
    <property type="match status" value="1"/>
</dbReference>
<organism>
    <name type="scientific">Buchnera aphidicola subsp. Baizongia pistaciae (strain Bp)</name>
    <dbReference type="NCBI Taxonomy" id="224915"/>
    <lineage>
        <taxon>Bacteria</taxon>
        <taxon>Pseudomonadati</taxon>
        <taxon>Pseudomonadota</taxon>
        <taxon>Gammaproteobacteria</taxon>
        <taxon>Enterobacterales</taxon>
        <taxon>Erwiniaceae</taxon>
        <taxon>Buchnera</taxon>
    </lineage>
</organism>
<sequence>MKEVAKEIIKIDIEDELKNSYLDYAMSVIIGRALPDVRDGLKPVHRRILFAMKVLNNDWNKTYKKSARIVGDVIGKYHPHGDTAVYDAIVRMAQPFSLRYVLIDGQGNFGSIDGDSAAAMRYTEIRMSKIAYELLNDLDKNTVSFFSNYDGTEKIPEVLPAKIPNLLINGSSGIAVGMATNIPPHNIKEVINGCLAFIDDQNITLKKLMEHIPGPDFPTAGLINGKRGIEKAYKTGKGKIYIRAKSIIEIQKKTKKKSIIIYELPYQVNKARVIKGIANLVKEKKIEGITTLRDESDKEGMRIVIEIKKETKAEIILNQLYSLTQLEISFGINMVALIHGQPKVMTLKEILNAFINHRRKIIMRRSLFELNKIRKKIHILEGLIISLDNIDLIINLIKKSSTLEEAKNKLKTYHWYSKHAQYTQILKKNAHSLTPYDKKLRPIDTQKFFLTPEQIQAILELRLQKLTHLEHKKLISEYKQLFKTSNNLENILKNNNILTKIMKDELIKIRDNFGDKRRTKINVNYSDINTSDLINKENVVITLSYSGYVKYQLLSSYEAQKRGGKGKLAVKTKEEDFIENLLVANTHDIILCFSSKGILYWMKVYQLPEASRHARGRPIVNLLPLSSNERITAILPISEYKDSINIFMATSKGMVKKTSLYEFKKPRTKGIIAINLKADDELIGVSLTNGNNTIMLFTAQGKAVHFSEILVRKTGRTAIGVQGIKIKKSDKVVSLVVPKKHGNILLITEHGYGKRTEIHEFPIKSRATQGTIAMKITKKNGIVIGTMQVVNQDQIIIITNAGTLVRTRVLEIGILGRNTQGVIIIRTSKKEKVVALQKANALHLNSV</sequence>
<accession>Q89AS3</accession>
<name>GYRA_BUCBP</name>
<gene>
    <name evidence="1" type="primary">gyrA</name>
    <name type="ordered locus">bbp_169</name>
</gene>
<keyword id="KW-0067">ATP-binding</keyword>
<keyword id="KW-0963">Cytoplasm</keyword>
<keyword id="KW-0238">DNA-binding</keyword>
<keyword id="KW-0413">Isomerase</keyword>
<keyword id="KW-0547">Nucleotide-binding</keyword>
<keyword id="KW-1185">Reference proteome</keyword>
<keyword id="KW-0799">Topoisomerase</keyword>
<evidence type="ECO:0000255" key="1">
    <source>
        <dbReference type="HAMAP-Rule" id="MF_01897"/>
    </source>
</evidence>
<evidence type="ECO:0000255" key="2">
    <source>
        <dbReference type="PROSITE-ProRule" id="PRU01384"/>
    </source>
</evidence>
<feature type="chain" id="PRO_0000145225" description="DNA gyrase subunit A">
    <location>
        <begin position="1"/>
        <end position="847"/>
    </location>
</feature>
<feature type="domain" description="Topo IIA-type catalytic" evidence="2">
    <location>
        <begin position="34"/>
        <end position="533"/>
    </location>
</feature>
<feature type="short sequence motif" description="GyrA-box" evidence="1">
    <location>
        <begin position="560"/>
        <end position="566"/>
    </location>
</feature>
<feature type="active site" description="O-(5'-phospho-DNA)-tyrosine intermediate" evidence="1">
    <location>
        <position position="122"/>
    </location>
</feature>
<comment type="function">
    <text evidence="1">A type II topoisomerase that negatively supercoils closed circular double-stranded (ds) DNA in an ATP-dependent manner to modulate DNA topology and maintain chromosomes in an underwound state. Negative supercoiling favors strand separation, and DNA replication, transcription, recombination and repair, all of which involve strand separation. Also able to catalyze the interconversion of other topological isomers of dsDNA rings, including catenanes and knotted rings. Type II topoisomerases break and join 2 DNA strands simultaneously in an ATP-dependent manner.</text>
</comment>
<comment type="catalytic activity">
    <reaction evidence="1">
        <text>ATP-dependent breakage, passage and rejoining of double-stranded DNA.</text>
        <dbReference type="EC" id="5.6.2.2"/>
    </reaction>
</comment>
<comment type="subunit">
    <text evidence="1">Heterotetramer, composed of two GyrA and two GyrB chains. In the heterotetramer, GyrA contains the active site tyrosine that forms a transient covalent intermediate with DNA, while GyrB binds cofactors and catalyzes ATP hydrolysis.</text>
</comment>
<comment type="subcellular location">
    <subcellularLocation>
        <location evidence="1">Cytoplasm</location>
    </subcellularLocation>
</comment>
<comment type="miscellaneous">
    <text evidence="1">Few gyrases are as efficient as E.coli at forming negative supercoils. Not all organisms have 2 type II topoisomerases; in organisms with a single type II topoisomerase this enzyme also has to decatenate newly replicated chromosomes.</text>
</comment>
<comment type="similarity">
    <text evidence="1">Belongs to the type II topoisomerase GyrA/ParC subunit family.</text>
</comment>
<protein>
    <recommendedName>
        <fullName evidence="1">DNA gyrase subunit A</fullName>
        <ecNumber evidence="1">5.6.2.2</ecNumber>
    </recommendedName>
</protein>
<proteinExistence type="inferred from homology"/>